<dbReference type="EMBL" id="CP000919">
    <property type="protein sequence ID" value="ACO19482.1"/>
    <property type="molecule type" value="Genomic_DNA"/>
</dbReference>
<dbReference type="RefSeq" id="WP_001041974.1">
    <property type="nucleotide sequence ID" value="NC_012466.1"/>
</dbReference>
<dbReference type="SMR" id="C1CEZ2"/>
<dbReference type="KEGG" id="sjj:SPJ_1303"/>
<dbReference type="HOGENOM" id="CLU_166693_0_0_9"/>
<dbReference type="Proteomes" id="UP000002206">
    <property type="component" value="Chromosome"/>
</dbReference>
<dbReference type="Gene3D" id="1.10.220.80">
    <property type="entry name" value="BH2638-like"/>
    <property type="match status" value="1"/>
</dbReference>
<dbReference type="HAMAP" id="MF_01041">
    <property type="entry name" value="UPF0223"/>
    <property type="match status" value="1"/>
</dbReference>
<dbReference type="InterPro" id="IPR023324">
    <property type="entry name" value="BH2638-like_sf"/>
</dbReference>
<dbReference type="InterPro" id="IPR007920">
    <property type="entry name" value="UPF0223"/>
</dbReference>
<dbReference type="NCBIfam" id="NF003353">
    <property type="entry name" value="PRK04387.1"/>
    <property type="match status" value="1"/>
</dbReference>
<dbReference type="Pfam" id="PF05256">
    <property type="entry name" value="UPF0223"/>
    <property type="match status" value="1"/>
</dbReference>
<dbReference type="PIRSF" id="PIRSF037260">
    <property type="entry name" value="UPF0223"/>
    <property type="match status" value="1"/>
</dbReference>
<dbReference type="SUPFAM" id="SSF158504">
    <property type="entry name" value="BH2638-like"/>
    <property type="match status" value="1"/>
</dbReference>
<sequence>MNKQYSYPLDLSWSTEELASVLSFFNDVEAAYEGKVEAKKLLDSYKGFKAVVPSKSEEKRLGREFETVSGYSLYRAVQAAKEKGEGKISLGK</sequence>
<proteinExistence type="inferred from homology"/>
<gene>
    <name type="ordered locus">SPJ_1303</name>
</gene>
<feature type="chain" id="PRO_1000149549" description="UPF0223 protein SPJ_1303">
    <location>
        <begin position="1"/>
        <end position="92"/>
    </location>
</feature>
<reference key="1">
    <citation type="journal article" date="2010" name="Genome Biol.">
        <title>Structure and dynamics of the pan-genome of Streptococcus pneumoniae and closely related species.</title>
        <authorList>
            <person name="Donati C."/>
            <person name="Hiller N.L."/>
            <person name="Tettelin H."/>
            <person name="Muzzi A."/>
            <person name="Croucher N.J."/>
            <person name="Angiuoli S.V."/>
            <person name="Oggioni M."/>
            <person name="Dunning Hotopp J.C."/>
            <person name="Hu F.Z."/>
            <person name="Riley D.R."/>
            <person name="Covacci A."/>
            <person name="Mitchell T.J."/>
            <person name="Bentley S.D."/>
            <person name="Kilian M."/>
            <person name="Ehrlich G.D."/>
            <person name="Rappuoli R."/>
            <person name="Moxon E.R."/>
            <person name="Masignani V."/>
        </authorList>
    </citation>
    <scope>NUCLEOTIDE SEQUENCE [LARGE SCALE GENOMIC DNA]</scope>
    <source>
        <strain>JJA</strain>
    </source>
</reference>
<name>Y1303_STRZJ</name>
<accession>C1CEZ2</accession>
<organism>
    <name type="scientific">Streptococcus pneumoniae (strain JJA)</name>
    <dbReference type="NCBI Taxonomy" id="488222"/>
    <lineage>
        <taxon>Bacteria</taxon>
        <taxon>Bacillati</taxon>
        <taxon>Bacillota</taxon>
        <taxon>Bacilli</taxon>
        <taxon>Lactobacillales</taxon>
        <taxon>Streptococcaceae</taxon>
        <taxon>Streptococcus</taxon>
    </lineage>
</organism>
<comment type="similarity">
    <text evidence="1">Belongs to the UPF0223 family.</text>
</comment>
<protein>
    <recommendedName>
        <fullName evidence="1">UPF0223 protein SPJ_1303</fullName>
    </recommendedName>
</protein>
<evidence type="ECO:0000255" key="1">
    <source>
        <dbReference type="HAMAP-Rule" id="MF_01041"/>
    </source>
</evidence>